<organism>
    <name type="scientific">Histophilus somni (strain 2336)</name>
    <name type="common">Haemophilus somnus</name>
    <dbReference type="NCBI Taxonomy" id="228400"/>
    <lineage>
        <taxon>Bacteria</taxon>
        <taxon>Pseudomonadati</taxon>
        <taxon>Pseudomonadota</taxon>
        <taxon>Gammaproteobacteria</taxon>
        <taxon>Pasteurellales</taxon>
        <taxon>Pasteurellaceae</taxon>
        <taxon>Histophilus</taxon>
    </lineage>
</organism>
<dbReference type="EC" id="4.3.3.7" evidence="1"/>
<dbReference type="EMBL" id="CP000947">
    <property type="protein sequence ID" value="ACA31561.1"/>
    <property type="molecule type" value="Genomic_DNA"/>
</dbReference>
<dbReference type="RefSeq" id="WP_012340884.1">
    <property type="nucleotide sequence ID" value="NC_010519.1"/>
</dbReference>
<dbReference type="SMR" id="B0UVZ8"/>
<dbReference type="STRING" id="228400.HSM_1779"/>
<dbReference type="GeneID" id="31488086"/>
<dbReference type="KEGG" id="hsm:HSM_1779"/>
<dbReference type="HOGENOM" id="CLU_049343_7_1_6"/>
<dbReference type="UniPathway" id="UPA00034">
    <property type="reaction ID" value="UER00017"/>
</dbReference>
<dbReference type="GO" id="GO:0005829">
    <property type="term" value="C:cytosol"/>
    <property type="evidence" value="ECO:0007669"/>
    <property type="project" value="TreeGrafter"/>
</dbReference>
<dbReference type="GO" id="GO:0008840">
    <property type="term" value="F:4-hydroxy-tetrahydrodipicolinate synthase activity"/>
    <property type="evidence" value="ECO:0007669"/>
    <property type="project" value="UniProtKB-UniRule"/>
</dbReference>
<dbReference type="GO" id="GO:0019877">
    <property type="term" value="P:diaminopimelate biosynthetic process"/>
    <property type="evidence" value="ECO:0007669"/>
    <property type="project" value="UniProtKB-UniRule"/>
</dbReference>
<dbReference type="GO" id="GO:0009089">
    <property type="term" value="P:lysine biosynthetic process via diaminopimelate"/>
    <property type="evidence" value="ECO:0007669"/>
    <property type="project" value="UniProtKB-UniRule"/>
</dbReference>
<dbReference type="CDD" id="cd00950">
    <property type="entry name" value="DHDPS"/>
    <property type="match status" value="1"/>
</dbReference>
<dbReference type="FunFam" id="3.20.20.70:FF:000046">
    <property type="entry name" value="4-hydroxy-tetrahydrodipicolinate synthase"/>
    <property type="match status" value="1"/>
</dbReference>
<dbReference type="Gene3D" id="3.20.20.70">
    <property type="entry name" value="Aldolase class I"/>
    <property type="match status" value="1"/>
</dbReference>
<dbReference type="HAMAP" id="MF_00418">
    <property type="entry name" value="DapA"/>
    <property type="match status" value="1"/>
</dbReference>
<dbReference type="InterPro" id="IPR013785">
    <property type="entry name" value="Aldolase_TIM"/>
</dbReference>
<dbReference type="InterPro" id="IPR005263">
    <property type="entry name" value="DapA"/>
</dbReference>
<dbReference type="InterPro" id="IPR002220">
    <property type="entry name" value="DapA-like"/>
</dbReference>
<dbReference type="InterPro" id="IPR020625">
    <property type="entry name" value="Schiff_base-form_aldolases_AS"/>
</dbReference>
<dbReference type="InterPro" id="IPR020624">
    <property type="entry name" value="Schiff_base-form_aldolases_CS"/>
</dbReference>
<dbReference type="NCBIfam" id="TIGR00674">
    <property type="entry name" value="dapA"/>
    <property type="match status" value="1"/>
</dbReference>
<dbReference type="PANTHER" id="PTHR12128:SF66">
    <property type="entry name" value="4-HYDROXY-2-OXOGLUTARATE ALDOLASE, MITOCHONDRIAL"/>
    <property type="match status" value="1"/>
</dbReference>
<dbReference type="PANTHER" id="PTHR12128">
    <property type="entry name" value="DIHYDRODIPICOLINATE SYNTHASE"/>
    <property type="match status" value="1"/>
</dbReference>
<dbReference type="Pfam" id="PF00701">
    <property type="entry name" value="DHDPS"/>
    <property type="match status" value="1"/>
</dbReference>
<dbReference type="PIRSF" id="PIRSF001365">
    <property type="entry name" value="DHDPS"/>
    <property type="match status" value="1"/>
</dbReference>
<dbReference type="PRINTS" id="PR00146">
    <property type="entry name" value="DHPICSNTHASE"/>
</dbReference>
<dbReference type="SMART" id="SM01130">
    <property type="entry name" value="DHDPS"/>
    <property type="match status" value="1"/>
</dbReference>
<dbReference type="SUPFAM" id="SSF51569">
    <property type="entry name" value="Aldolase"/>
    <property type="match status" value="1"/>
</dbReference>
<dbReference type="PROSITE" id="PS00665">
    <property type="entry name" value="DHDPS_1"/>
    <property type="match status" value="1"/>
</dbReference>
<dbReference type="PROSITE" id="PS00666">
    <property type="entry name" value="DHDPS_2"/>
    <property type="match status" value="1"/>
</dbReference>
<keyword id="KW-0028">Amino-acid biosynthesis</keyword>
<keyword id="KW-0963">Cytoplasm</keyword>
<keyword id="KW-0220">Diaminopimelate biosynthesis</keyword>
<keyword id="KW-0456">Lyase</keyword>
<keyword id="KW-0457">Lysine biosynthesis</keyword>
<keyword id="KW-0704">Schiff base</keyword>
<gene>
    <name evidence="1" type="primary">dapA</name>
    <name type="ordered locus">HSM_1779</name>
</gene>
<comment type="function">
    <text evidence="1">Catalyzes the condensation of (S)-aspartate-beta-semialdehyde [(S)-ASA] and pyruvate to 4-hydroxy-tetrahydrodipicolinate (HTPA).</text>
</comment>
<comment type="catalytic activity">
    <reaction evidence="1">
        <text>L-aspartate 4-semialdehyde + pyruvate = (2S,4S)-4-hydroxy-2,3,4,5-tetrahydrodipicolinate + H2O + H(+)</text>
        <dbReference type="Rhea" id="RHEA:34171"/>
        <dbReference type="ChEBI" id="CHEBI:15361"/>
        <dbReference type="ChEBI" id="CHEBI:15377"/>
        <dbReference type="ChEBI" id="CHEBI:15378"/>
        <dbReference type="ChEBI" id="CHEBI:67139"/>
        <dbReference type="ChEBI" id="CHEBI:537519"/>
        <dbReference type="EC" id="4.3.3.7"/>
    </reaction>
</comment>
<comment type="pathway">
    <text evidence="1">Amino-acid biosynthesis; L-lysine biosynthesis via DAP pathway; (S)-tetrahydrodipicolinate from L-aspartate: step 3/4.</text>
</comment>
<comment type="subunit">
    <text evidence="1">Homotetramer; dimer of dimers.</text>
</comment>
<comment type="subcellular location">
    <subcellularLocation>
        <location evidence="1">Cytoplasm</location>
    </subcellularLocation>
</comment>
<comment type="similarity">
    <text evidence="1">Belongs to the DapA family.</text>
</comment>
<comment type="caution">
    <text evidence="2">Was originally thought to be a dihydrodipicolinate synthase (DHDPS), catalyzing the condensation of (S)-aspartate-beta-semialdehyde [(S)-ASA] and pyruvate to dihydrodipicolinate (DHDP). However, it was shown in E.coli that the product of the enzymatic reaction is not dihydrodipicolinate but in fact (4S)-4-hydroxy-2,3,4,5-tetrahydro-(2S)-dipicolinic acid (HTPA), and that the consecutive dehydration reaction leading to DHDP is not spontaneous but catalyzed by DapB.</text>
</comment>
<protein>
    <recommendedName>
        <fullName evidence="1">4-hydroxy-tetrahydrodipicolinate synthase</fullName>
        <shortName evidence="1">HTPA synthase</shortName>
        <ecNumber evidence="1">4.3.3.7</ecNumber>
    </recommendedName>
</protein>
<proteinExistence type="inferred from homology"/>
<sequence length="298" mass="31738">MTTHRPLFYGSITALITPMDNHGEVDFNALKKLVEYHIASGTHAIVSVGTTGESATLSIAENVKTILKTLEFADGRIPVIAGTGANATSEAITMTKLLNDSGVAGCLSVVPYYNKPTQEGMYQHFKAIAECTDIPQILYNVPSRTGSDLLPETVGRLAQISNIIGIKEATGDVSRVAKIKQAAGDDFIFLSGDDATGLESMKLGGQGVISVTNNIAAADMAKMCELALAGKFDEAEIINDKLSALHKDLFIESNPIPVKWAAYKLGLIPEPILRLPLTTLSEQSQPKVIEALKNAGLL</sequence>
<name>DAPA_HISS2</name>
<reference key="1">
    <citation type="submission" date="2008-02" db="EMBL/GenBank/DDBJ databases">
        <title>Complete sequence of Haemophilus somnus 2336.</title>
        <authorList>
            <consortium name="US DOE Joint Genome Institute"/>
            <person name="Siddaramappa S."/>
            <person name="Duncan A.J."/>
            <person name="Challacombe J.F."/>
            <person name="Rainey D."/>
            <person name="Gillaspy A.F."/>
            <person name="Carson M."/>
            <person name="Gipson J."/>
            <person name="Gipson M."/>
            <person name="Bruce D."/>
            <person name="Detter J.C."/>
            <person name="Han C.S."/>
            <person name="Land M."/>
            <person name="Tapia R."/>
            <person name="Thompson L.S."/>
            <person name="Orvis J."/>
            <person name="Zaitshik J."/>
            <person name="Barnes G."/>
            <person name="Brettin T.S."/>
            <person name="Dyer D.W."/>
            <person name="Inzana T.J."/>
        </authorList>
    </citation>
    <scope>NUCLEOTIDE SEQUENCE [LARGE SCALE GENOMIC DNA]</scope>
    <source>
        <strain>2336</strain>
    </source>
</reference>
<accession>B0UVZ8</accession>
<evidence type="ECO:0000255" key="1">
    <source>
        <dbReference type="HAMAP-Rule" id="MF_00418"/>
    </source>
</evidence>
<evidence type="ECO:0000305" key="2"/>
<feature type="chain" id="PRO_1000080533" description="4-hydroxy-tetrahydrodipicolinate synthase">
    <location>
        <begin position="1"/>
        <end position="298"/>
    </location>
</feature>
<feature type="active site" description="Proton donor/acceptor" evidence="1">
    <location>
        <position position="139"/>
    </location>
</feature>
<feature type="active site" description="Schiff-base intermediate with substrate" evidence="1">
    <location>
        <position position="167"/>
    </location>
</feature>
<feature type="binding site" evidence="1">
    <location>
        <position position="51"/>
    </location>
    <ligand>
        <name>pyruvate</name>
        <dbReference type="ChEBI" id="CHEBI:15361"/>
    </ligand>
</feature>
<feature type="binding site" evidence="1">
    <location>
        <position position="209"/>
    </location>
    <ligand>
        <name>pyruvate</name>
        <dbReference type="ChEBI" id="CHEBI:15361"/>
    </ligand>
</feature>
<feature type="site" description="Part of a proton relay during catalysis" evidence="1">
    <location>
        <position position="50"/>
    </location>
</feature>
<feature type="site" description="Part of a proton relay during catalysis" evidence="1">
    <location>
        <position position="113"/>
    </location>
</feature>